<proteinExistence type="inferred from homology"/>
<gene>
    <name evidence="1" type="primary">xseA</name>
    <name type="ordered locus">spr1089</name>
</gene>
<dbReference type="EC" id="3.1.11.6" evidence="1"/>
<dbReference type="EMBL" id="AE007317">
    <property type="protein sequence ID" value="AAK99892.1"/>
    <property type="status" value="ALT_INIT"/>
    <property type="molecule type" value="Genomic_DNA"/>
</dbReference>
<dbReference type="PIR" id="H98007">
    <property type="entry name" value="H98007"/>
</dbReference>
<dbReference type="RefSeq" id="NP_358682.1">
    <property type="nucleotide sequence ID" value="NC_003098.1"/>
</dbReference>
<dbReference type="RefSeq" id="WP_000417487.1">
    <property type="nucleotide sequence ID" value="NC_003098.1"/>
</dbReference>
<dbReference type="SMR" id="Q8DPM9"/>
<dbReference type="STRING" id="171101.spr1089"/>
<dbReference type="KEGG" id="spr:spr1089"/>
<dbReference type="PATRIC" id="fig|171101.6.peg.1183"/>
<dbReference type="eggNOG" id="COG1570">
    <property type="taxonomic scope" value="Bacteria"/>
</dbReference>
<dbReference type="HOGENOM" id="CLU_023625_3_1_9"/>
<dbReference type="Proteomes" id="UP000000586">
    <property type="component" value="Chromosome"/>
</dbReference>
<dbReference type="GO" id="GO:0005737">
    <property type="term" value="C:cytoplasm"/>
    <property type="evidence" value="ECO:0007669"/>
    <property type="project" value="UniProtKB-SubCell"/>
</dbReference>
<dbReference type="GO" id="GO:0009318">
    <property type="term" value="C:exodeoxyribonuclease VII complex"/>
    <property type="evidence" value="ECO:0007669"/>
    <property type="project" value="InterPro"/>
</dbReference>
<dbReference type="GO" id="GO:0008855">
    <property type="term" value="F:exodeoxyribonuclease VII activity"/>
    <property type="evidence" value="ECO:0007669"/>
    <property type="project" value="UniProtKB-UniRule"/>
</dbReference>
<dbReference type="GO" id="GO:0003676">
    <property type="term" value="F:nucleic acid binding"/>
    <property type="evidence" value="ECO:0007669"/>
    <property type="project" value="InterPro"/>
</dbReference>
<dbReference type="GO" id="GO:0006308">
    <property type="term" value="P:DNA catabolic process"/>
    <property type="evidence" value="ECO:0007669"/>
    <property type="project" value="UniProtKB-UniRule"/>
</dbReference>
<dbReference type="CDD" id="cd04489">
    <property type="entry name" value="ExoVII_LU_OBF"/>
    <property type="match status" value="1"/>
</dbReference>
<dbReference type="HAMAP" id="MF_00378">
    <property type="entry name" value="Exonuc_7_L"/>
    <property type="match status" value="1"/>
</dbReference>
<dbReference type="InterPro" id="IPR003753">
    <property type="entry name" value="Exonuc_VII_L"/>
</dbReference>
<dbReference type="InterPro" id="IPR020579">
    <property type="entry name" value="Exonuc_VII_lsu_C"/>
</dbReference>
<dbReference type="InterPro" id="IPR025824">
    <property type="entry name" value="OB-fold_nuc-bd_dom"/>
</dbReference>
<dbReference type="NCBIfam" id="TIGR00237">
    <property type="entry name" value="xseA"/>
    <property type="match status" value="1"/>
</dbReference>
<dbReference type="PANTHER" id="PTHR30008">
    <property type="entry name" value="EXODEOXYRIBONUCLEASE 7 LARGE SUBUNIT"/>
    <property type="match status" value="1"/>
</dbReference>
<dbReference type="PANTHER" id="PTHR30008:SF0">
    <property type="entry name" value="EXODEOXYRIBONUCLEASE 7 LARGE SUBUNIT"/>
    <property type="match status" value="1"/>
</dbReference>
<dbReference type="Pfam" id="PF02601">
    <property type="entry name" value="Exonuc_VII_L"/>
    <property type="match status" value="1"/>
</dbReference>
<dbReference type="Pfam" id="PF13742">
    <property type="entry name" value="tRNA_anti_2"/>
    <property type="match status" value="1"/>
</dbReference>
<name>EX7L_STRR6</name>
<evidence type="ECO:0000255" key="1">
    <source>
        <dbReference type="HAMAP-Rule" id="MF_00378"/>
    </source>
</evidence>
<evidence type="ECO:0000305" key="2"/>
<accession>Q8DPM9</accession>
<protein>
    <recommendedName>
        <fullName evidence="1">Exodeoxyribonuclease 7 large subunit</fullName>
        <ecNumber evidence="1">3.1.11.6</ecNumber>
    </recommendedName>
    <alternativeName>
        <fullName evidence="1">Exodeoxyribonuclease VII large subunit</fullName>
        <shortName evidence="1">Exonuclease VII large subunit</shortName>
    </alternativeName>
</protein>
<sequence>MEKYLSVTTLTKYLKMKFDKDPYLERVYLTGQVSNFRKRPTHQYFSLKDDHAVIQATIWSGIYQKLGFDLEEGMKINVIGRVQVYEPSGSYSIIIEKVEPDGVGALAIQFEQLKKKLTEEGLFQERFKQALPQFSKRIGVVTSRSGAVIRDIITTVSRRFPGVDILLYPTKVQGEGAAEEIARNIARANQRDDLDLLIIGRGGGSIEDLWAFNEEIVVRAIFESRLPVISSVGHETDVTLADFVADRRAATPTAAAELATPVTKLDVLAHLQNQEKRMVTAVRNVLSKKQEALKKCSQSVIFRQPERLYDGYLQRLDQLQLRLKQSLRTRISDNKQLVQARTHQLVQLSPVTKIQRYQDRLGQLDKLLGSQMALVYDAKVAEAKRLSEALLMLDTSRIVARGYAIVKKEESVVDSVESLKKKDQVTLLMRDGQVELEVKDVKTKEI</sequence>
<organism>
    <name type="scientific">Streptococcus pneumoniae (strain ATCC BAA-255 / R6)</name>
    <dbReference type="NCBI Taxonomy" id="171101"/>
    <lineage>
        <taxon>Bacteria</taxon>
        <taxon>Bacillati</taxon>
        <taxon>Bacillota</taxon>
        <taxon>Bacilli</taxon>
        <taxon>Lactobacillales</taxon>
        <taxon>Streptococcaceae</taxon>
        <taxon>Streptococcus</taxon>
    </lineage>
</organism>
<reference key="1">
    <citation type="journal article" date="2001" name="J. Bacteriol.">
        <title>Genome of the bacterium Streptococcus pneumoniae strain R6.</title>
        <authorList>
            <person name="Hoskins J."/>
            <person name="Alborn W.E. Jr."/>
            <person name="Arnold J."/>
            <person name="Blaszczak L.C."/>
            <person name="Burgett S."/>
            <person name="DeHoff B.S."/>
            <person name="Estrem S.T."/>
            <person name="Fritz L."/>
            <person name="Fu D.-J."/>
            <person name="Fuller W."/>
            <person name="Geringer C."/>
            <person name="Gilmour R."/>
            <person name="Glass J.S."/>
            <person name="Khoja H."/>
            <person name="Kraft A.R."/>
            <person name="Lagace R.E."/>
            <person name="LeBlanc D.J."/>
            <person name="Lee L.N."/>
            <person name="Lefkowitz E.J."/>
            <person name="Lu J."/>
            <person name="Matsushima P."/>
            <person name="McAhren S.M."/>
            <person name="McHenney M."/>
            <person name="McLeaster K."/>
            <person name="Mundy C.W."/>
            <person name="Nicas T.I."/>
            <person name="Norris F.H."/>
            <person name="O'Gara M."/>
            <person name="Peery R.B."/>
            <person name="Robertson G.T."/>
            <person name="Rockey P."/>
            <person name="Sun P.-M."/>
            <person name="Winkler M.E."/>
            <person name="Yang Y."/>
            <person name="Young-Bellido M."/>
            <person name="Zhao G."/>
            <person name="Zook C.A."/>
            <person name="Baltz R.H."/>
            <person name="Jaskunas S.R."/>
            <person name="Rosteck P.R. Jr."/>
            <person name="Skatrud P.L."/>
            <person name="Glass J.I."/>
        </authorList>
    </citation>
    <scope>NUCLEOTIDE SEQUENCE [LARGE SCALE GENOMIC DNA]</scope>
    <source>
        <strain>ATCC BAA-255 / R6</strain>
    </source>
</reference>
<feature type="chain" id="PRO_0000197892" description="Exodeoxyribonuclease 7 large subunit">
    <location>
        <begin position="1"/>
        <end position="446"/>
    </location>
</feature>
<comment type="function">
    <text evidence="1">Bidirectionally degrades single-stranded DNA into large acid-insoluble oligonucleotides, which are then degraded further into small acid-soluble oligonucleotides.</text>
</comment>
<comment type="catalytic activity">
    <reaction evidence="1">
        <text>Exonucleolytic cleavage in either 5'- to 3'- or 3'- to 5'-direction to yield nucleoside 5'-phosphates.</text>
        <dbReference type="EC" id="3.1.11.6"/>
    </reaction>
</comment>
<comment type="subunit">
    <text evidence="1">Heterooligomer composed of large and small subunits.</text>
</comment>
<comment type="subcellular location">
    <subcellularLocation>
        <location evidence="1">Cytoplasm</location>
    </subcellularLocation>
</comment>
<comment type="similarity">
    <text evidence="1">Belongs to the XseA family.</text>
</comment>
<comment type="sequence caution" evidence="2">
    <conflict type="erroneous initiation">
        <sequence resource="EMBL-CDS" id="AAK99892"/>
    </conflict>
</comment>
<keyword id="KW-0963">Cytoplasm</keyword>
<keyword id="KW-0269">Exonuclease</keyword>
<keyword id="KW-0378">Hydrolase</keyword>
<keyword id="KW-0540">Nuclease</keyword>
<keyword id="KW-1185">Reference proteome</keyword>